<proteinExistence type="inferred from homology"/>
<reference key="1">
    <citation type="journal article" date="2001" name="Proc. Natl. Acad. Sci. U.S.A.">
        <title>Complete genome sequence of Caulobacter crescentus.</title>
        <authorList>
            <person name="Nierman W.C."/>
            <person name="Feldblyum T.V."/>
            <person name="Laub M.T."/>
            <person name="Paulsen I.T."/>
            <person name="Nelson K.E."/>
            <person name="Eisen J.A."/>
            <person name="Heidelberg J.F."/>
            <person name="Alley M.R.K."/>
            <person name="Ohta N."/>
            <person name="Maddock J.R."/>
            <person name="Potocka I."/>
            <person name="Nelson W.C."/>
            <person name="Newton A."/>
            <person name="Stephens C."/>
            <person name="Phadke N.D."/>
            <person name="Ely B."/>
            <person name="DeBoy R.T."/>
            <person name="Dodson R.J."/>
            <person name="Durkin A.S."/>
            <person name="Gwinn M.L."/>
            <person name="Haft D.H."/>
            <person name="Kolonay J.F."/>
            <person name="Smit J."/>
            <person name="Craven M.B."/>
            <person name="Khouri H.M."/>
            <person name="Shetty J."/>
            <person name="Berry K.J."/>
            <person name="Utterback T.R."/>
            <person name="Tran K."/>
            <person name="Wolf A.M."/>
            <person name="Vamathevan J.J."/>
            <person name="Ermolaeva M.D."/>
            <person name="White O."/>
            <person name="Salzberg S.L."/>
            <person name="Venter J.C."/>
            <person name="Shapiro L."/>
            <person name="Fraser C.M."/>
        </authorList>
    </citation>
    <scope>NUCLEOTIDE SEQUENCE [LARGE SCALE GENOMIC DNA]</scope>
    <source>
        <strain>ATCC 19089 / CIP 103742 / CB 15</strain>
    </source>
</reference>
<dbReference type="EC" id="6.3.5.2" evidence="1"/>
<dbReference type="EMBL" id="AE005673">
    <property type="protein sequence ID" value="AAK23599.1"/>
    <property type="molecule type" value="Genomic_DNA"/>
</dbReference>
<dbReference type="PIR" id="C87450">
    <property type="entry name" value="C87450"/>
</dbReference>
<dbReference type="RefSeq" id="NP_420431.1">
    <property type="nucleotide sequence ID" value="NC_002696.2"/>
</dbReference>
<dbReference type="RefSeq" id="WP_010919494.1">
    <property type="nucleotide sequence ID" value="NC_002696.2"/>
</dbReference>
<dbReference type="SMR" id="Q9A7U9"/>
<dbReference type="STRING" id="190650.CC_1620"/>
<dbReference type="MEROPS" id="C26.957"/>
<dbReference type="EnsemblBacteria" id="AAK23599">
    <property type="protein sequence ID" value="AAK23599"/>
    <property type="gene ID" value="CC_1620"/>
</dbReference>
<dbReference type="KEGG" id="ccr:CC_1620"/>
<dbReference type="PATRIC" id="fig|190650.5.peg.1647"/>
<dbReference type="eggNOG" id="COG0518">
    <property type="taxonomic scope" value="Bacteria"/>
</dbReference>
<dbReference type="eggNOG" id="COG0519">
    <property type="taxonomic scope" value="Bacteria"/>
</dbReference>
<dbReference type="HOGENOM" id="CLU_014340_0_5_5"/>
<dbReference type="BioCyc" id="CAULO:CC1620-MONOMER"/>
<dbReference type="UniPathway" id="UPA00189">
    <property type="reaction ID" value="UER00296"/>
</dbReference>
<dbReference type="Proteomes" id="UP000001816">
    <property type="component" value="Chromosome"/>
</dbReference>
<dbReference type="GO" id="GO:0005829">
    <property type="term" value="C:cytosol"/>
    <property type="evidence" value="ECO:0007669"/>
    <property type="project" value="TreeGrafter"/>
</dbReference>
<dbReference type="GO" id="GO:0005524">
    <property type="term" value="F:ATP binding"/>
    <property type="evidence" value="ECO:0007669"/>
    <property type="project" value="UniProtKB-UniRule"/>
</dbReference>
<dbReference type="GO" id="GO:0003921">
    <property type="term" value="F:GMP synthase activity"/>
    <property type="evidence" value="ECO:0007669"/>
    <property type="project" value="InterPro"/>
</dbReference>
<dbReference type="CDD" id="cd01742">
    <property type="entry name" value="GATase1_GMP_Synthase"/>
    <property type="match status" value="1"/>
</dbReference>
<dbReference type="CDD" id="cd01997">
    <property type="entry name" value="GMP_synthase_C"/>
    <property type="match status" value="1"/>
</dbReference>
<dbReference type="FunFam" id="3.30.300.10:FF:000002">
    <property type="entry name" value="GMP synthase [glutamine-hydrolyzing]"/>
    <property type="match status" value="1"/>
</dbReference>
<dbReference type="FunFam" id="3.40.50.620:FF:000001">
    <property type="entry name" value="GMP synthase [glutamine-hydrolyzing]"/>
    <property type="match status" value="1"/>
</dbReference>
<dbReference type="FunFam" id="3.40.50.880:FF:000001">
    <property type="entry name" value="GMP synthase [glutamine-hydrolyzing]"/>
    <property type="match status" value="1"/>
</dbReference>
<dbReference type="Gene3D" id="3.30.300.10">
    <property type="match status" value="1"/>
</dbReference>
<dbReference type="Gene3D" id="3.40.50.880">
    <property type="match status" value="1"/>
</dbReference>
<dbReference type="Gene3D" id="3.40.50.620">
    <property type="entry name" value="HUPs"/>
    <property type="match status" value="1"/>
</dbReference>
<dbReference type="HAMAP" id="MF_00344">
    <property type="entry name" value="GMP_synthase"/>
    <property type="match status" value="1"/>
</dbReference>
<dbReference type="InterPro" id="IPR029062">
    <property type="entry name" value="Class_I_gatase-like"/>
</dbReference>
<dbReference type="InterPro" id="IPR017926">
    <property type="entry name" value="GATASE"/>
</dbReference>
<dbReference type="InterPro" id="IPR001674">
    <property type="entry name" value="GMP_synth_C"/>
</dbReference>
<dbReference type="InterPro" id="IPR004739">
    <property type="entry name" value="GMP_synth_GATase"/>
</dbReference>
<dbReference type="InterPro" id="IPR022955">
    <property type="entry name" value="GMP_synthase"/>
</dbReference>
<dbReference type="InterPro" id="IPR025777">
    <property type="entry name" value="GMPS_ATP_PPase_dom"/>
</dbReference>
<dbReference type="InterPro" id="IPR022310">
    <property type="entry name" value="NAD/GMP_synthase"/>
</dbReference>
<dbReference type="InterPro" id="IPR014729">
    <property type="entry name" value="Rossmann-like_a/b/a_fold"/>
</dbReference>
<dbReference type="NCBIfam" id="TIGR00884">
    <property type="entry name" value="guaA_Cterm"/>
    <property type="match status" value="1"/>
</dbReference>
<dbReference type="NCBIfam" id="TIGR00888">
    <property type="entry name" value="guaA_Nterm"/>
    <property type="match status" value="1"/>
</dbReference>
<dbReference type="NCBIfam" id="NF000848">
    <property type="entry name" value="PRK00074.1"/>
    <property type="match status" value="1"/>
</dbReference>
<dbReference type="PANTHER" id="PTHR11922:SF2">
    <property type="entry name" value="GMP SYNTHASE [GLUTAMINE-HYDROLYZING]"/>
    <property type="match status" value="1"/>
</dbReference>
<dbReference type="PANTHER" id="PTHR11922">
    <property type="entry name" value="GMP SYNTHASE-RELATED"/>
    <property type="match status" value="1"/>
</dbReference>
<dbReference type="Pfam" id="PF00117">
    <property type="entry name" value="GATase"/>
    <property type="match status" value="1"/>
</dbReference>
<dbReference type="Pfam" id="PF00958">
    <property type="entry name" value="GMP_synt_C"/>
    <property type="match status" value="1"/>
</dbReference>
<dbReference type="Pfam" id="PF02540">
    <property type="entry name" value="NAD_synthase"/>
    <property type="match status" value="1"/>
</dbReference>
<dbReference type="PRINTS" id="PR00096">
    <property type="entry name" value="GATASE"/>
</dbReference>
<dbReference type="SUPFAM" id="SSF52402">
    <property type="entry name" value="Adenine nucleotide alpha hydrolases-like"/>
    <property type="match status" value="1"/>
</dbReference>
<dbReference type="SUPFAM" id="SSF52317">
    <property type="entry name" value="Class I glutamine amidotransferase-like"/>
    <property type="match status" value="1"/>
</dbReference>
<dbReference type="SUPFAM" id="SSF54810">
    <property type="entry name" value="GMP synthetase C-terminal dimerisation domain"/>
    <property type="match status" value="1"/>
</dbReference>
<dbReference type="PROSITE" id="PS51273">
    <property type="entry name" value="GATASE_TYPE_1"/>
    <property type="match status" value="1"/>
</dbReference>
<dbReference type="PROSITE" id="PS51553">
    <property type="entry name" value="GMPS_ATP_PPASE"/>
    <property type="match status" value="1"/>
</dbReference>
<name>GUAA_CAUVC</name>
<feature type="chain" id="PRO_0000140107" description="GMP synthase [glutamine-hydrolyzing]">
    <location>
        <begin position="1"/>
        <end position="520"/>
    </location>
</feature>
<feature type="domain" description="Glutamine amidotransferase type-1" evidence="1">
    <location>
        <begin position="9"/>
        <end position="202"/>
    </location>
</feature>
<feature type="domain" description="GMPS ATP-PPase" evidence="1">
    <location>
        <begin position="203"/>
        <end position="395"/>
    </location>
</feature>
<feature type="active site" description="Nucleophile" evidence="1">
    <location>
        <position position="86"/>
    </location>
</feature>
<feature type="active site" evidence="1">
    <location>
        <position position="176"/>
    </location>
</feature>
<feature type="active site" evidence="1">
    <location>
        <position position="178"/>
    </location>
</feature>
<feature type="binding site" evidence="1">
    <location>
        <begin position="230"/>
        <end position="236"/>
    </location>
    <ligand>
        <name>ATP</name>
        <dbReference type="ChEBI" id="CHEBI:30616"/>
    </ligand>
</feature>
<sequence length="520" mass="56338">MTQKTDHQRVLIVDFGSQVTQLIARRVREAGVYCEIHPFDKAEAIVDEYAPSAIILSGGPASVLEADSPRIGRKLFDLGLPLLAICYGQQLLCDVLSGKVEGGHAGEFGRAELTIGKDSPMFQGLAGVGGVETVWMSHGDRVTAIPEGFEVIGTSTGAPFAAIANDAKKIYALQFHPEVYHTVNGPAMYRNFLFNIAGLKGDWTMAAFRQEMVQKIRDQVGDGKVICGLSGGVDSSVAAVLIHEAIGDQLTCVFVDTGLLRKNEADQVVTLFRDHYNIPLVHVDAGDLFLGELAGVSDPETKRKTIGRLFIDVFDKEAAKIEGATFLAQGTLYPDVVESVSARGGPSAVIKSHHNVGGLPDYMKLKLVEPLRELFKDEVRALGVELGLAPAFVGRHPFPGPGLAIRIPGEITPEKVKVLQDADAIYLEEIRNAGLYDQIWQAFAVLLPVKTVGVMGDARTYENVLALRAVTSTDGMTADFFEFPWPVLGKTATRIINEVRGVNRVVYDVTSKPPGTIEWE</sequence>
<comment type="function">
    <text evidence="1">Catalyzes the synthesis of GMP from XMP.</text>
</comment>
<comment type="catalytic activity">
    <reaction evidence="1">
        <text>XMP + L-glutamine + ATP + H2O = GMP + L-glutamate + AMP + diphosphate + 2 H(+)</text>
        <dbReference type="Rhea" id="RHEA:11680"/>
        <dbReference type="ChEBI" id="CHEBI:15377"/>
        <dbReference type="ChEBI" id="CHEBI:15378"/>
        <dbReference type="ChEBI" id="CHEBI:29985"/>
        <dbReference type="ChEBI" id="CHEBI:30616"/>
        <dbReference type="ChEBI" id="CHEBI:33019"/>
        <dbReference type="ChEBI" id="CHEBI:57464"/>
        <dbReference type="ChEBI" id="CHEBI:58115"/>
        <dbReference type="ChEBI" id="CHEBI:58359"/>
        <dbReference type="ChEBI" id="CHEBI:456215"/>
        <dbReference type="EC" id="6.3.5.2"/>
    </reaction>
</comment>
<comment type="pathway">
    <text evidence="1">Purine metabolism; GMP biosynthesis; GMP from XMP (L-Gln route): step 1/1.</text>
</comment>
<comment type="subunit">
    <text evidence="1">Homodimer.</text>
</comment>
<gene>
    <name evidence="1" type="primary">guaA</name>
    <name type="ordered locus">CC_1620</name>
</gene>
<evidence type="ECO:0000255" key="1">
    <source>
        <dbReference type="HAMAP-Rule" id="MF_00344"/>
    </source>
</evidence>
<protein>
    <recommendedName>
        <fullName evidence="1">GMP synthase [glutamine-hydrolyzing]</fullName>
        <ecNumber evidence="1">6.3.5.2</ecNumber>
    </recommendedName>
    <alternativeName>
        <fullName evidence="1">GMP synthetase</fullName>
    </alternativeName>
    <alternativeName>
        <fullName evidence="1">Glutamine amidotransferase</fullName>
    </alternativeName>
</protein>
<accession>Q9A7U9</accession>
<keyword id="KW-0067">ATP-binding</keyword>
<keyword id="KW-0315">Glutamine amidotransferase</keyword>
<keyword id="KW-0332">GMP biosynthesis</keyword>
<keyword id="KW-0436">Ligase</keyword>
<keyword id="KW-0547">Nucleotide-binding</keyword>
<keyword id="KW-0658">Purine biosynthesis</keyword>
<keyword id="KW-1185">Reference proteome</keyword>
<organism>
    <name type="scientific">Caulobacter vibrioides (strain ATCC 19089 / CIP 103742 / CB 15)</name>
    <name type="common">Caulobacter crescentus</name>
    <dbReference type="NCBI Taxonomy" id="190650"/>
    <lineage>
        <taxon>Bacteria</taxon>
        <taxon>Pseudomonadati</taxon>
        <taxon>Pseudomonadota</taxon>
        <taxon>Alphaproteobacteria</taxon>
        <taxon>Caulobacterales</taxon>
        <taxon>Caulobacteraceae</taxon>
        <taxon>Caulobacter</taxon>
    </lineage>
</organism>